<dbReference type="EC" id="2.1.3.2" evidence="1"/>
<dbReference type="EMBL" id="CP000813">
    <property type="protein sequence ID" value="ABV62131.1"/>
    <property type="molecule type" value="Genomic_DNA"/>
</dbReference>
<dbReference type="RefSeq" id="WP_012009894.1">
    <property type="nucleotide sequence ID" value="NZ_VEIC01000002.1"/>
</dbReference>
<dbReference type="SMR" id="A8FD14"/>
<dbReference type="STRING" id="315750.BPUM_1448"/>
<dbReference type="GeneID" id="5620712"/>
<dbReference type="KEGG" id="bpu:BPUM_1448"/>
<dbReference type="eggNOG" id="COG0540">
    <property type="taxonomic scope" value="Bacteria"/>
</dbReference>
<dbReference type="HOGENOM" id="CLU_043846_2_1_9"/>
<dbReference type="OrthoDB" id="9774690at2"/>
<dbReference type="UniPathway" id="UPA00070">
    <property type="reaction ID" value="UER00116"/>
</dbReference>
<dbReference type="Proteomes" id="UP000001355">
    <property type="component" value="Chromosome"/>
</dbReference>
<dbReference type="GO" id="GO:0005829">
    <property type="term" value="C:cytosol"/>
    <property type="evidence" value="ECO:0007669"/>
    <property type="project" value="TreeGrafter"/>
</dbReference>
<dbReference type="GO" id="GO:0016597">
    <property type="term" value="F:amino acid binding"/>
    <property type="evidence" value="ECO:0007669"/>
    <property type="project" value="InterPro"/>
</dbReference>
<dbReference type="GO" id="GO:0004070">
    <property type="term" value="F:aspartate carbamoyltransferase activity"/>
    <property type="evidence" value="ECO:0007669"/>
    <property type="project" value="UniProtKB-UniRule"/>
</dbReference>
<dbReference type="GO" id="GO:0006207">
    <property type="term" value="P:'de novo' pyrimidine nucleobase biosynthetic process"/>
    <property type="evidence" value="ECO:0007669"/>
    <property type="project" value="InterPro"/>
</dbReference>
<dbReference type="GO" id="GO:0044205">
    <property type="term" value="P:'de novo' UMP biosynthetic process"/>
    <property type="evidence" value="ECO:0007669"/>
    <property type="project" value="UniProtKB-UniRule"/>
</dbReference>
<dbReference type="GO" id="GO:0006520">
    <property type="term" value="P:amino acid metabolic process"/>
    <property type="evidence" value="ECO:0007669"/>
    <property type="project" value="InterPro"/>
</dbReference>
<dbReference type="FunFam" id="3.40.50.1370:FF:000011">
    <property type="entry name" value="Aspartate carbamoyltransferase"/>
    <property type="match status" value="1"/>
</dbReference>
<dbReference type="Gene3D" id="3.40.50.1370">
    <property type="entry name" value="Aspartate/ornithine carbamoyltransferase"/>
    <property type="match status" value="2"/>
</dbReference>
<dbReference type="HAMAP" id="MF_00001">
    <property type="entry name" value="Asp_carb_tr"/>
    <property type="match status" value="1"/>
</dbReference>
<dbReference type="InterPro" id="IPR006132">
    <property type="entry name" value="Asp/Orn_carbamoyltranf_P-bd"/>
</dbReference>
<dbReference type="InterPro" id="IPR006130">
    <property type="entry name" value="Asp/Orn_carbamoylTrfase"/>
</dbReference>
<dbReference type="InterPro" id="IPR036901">
    <property type="entry name" value="Asp/Orn_carbamoylTrfase_sf"/>
</dbReference>
<dbReference type="InterPro" id="IPR002082">
    <property type="entry name" value="Asp_carbamoyltransf"/>
</dbReference>
<dbReference type="InterPro" id="IPR006131">
    <property type="entry name" value="Asp_carbamoyltransf_Asp/Orn-bd"/>
</dbReference>
<dbReference type="NCBIfam" id="TIGR00670">
    <property type="entry name" value="asp_carb_tr"/>
    <property type="match status" value="1"/>
</dbReference>
<dbReference type="NCBIfam" id="NF002032">
    <property type="entry name" value="PRK00856.1"/>
    <property type="match status" value="1"/>
</dbReference>
<dbReference type="PANTHER" id="PTHR45753:SF6">
    <property type="entry name" value="ASPARTATE CARBAMOYLTRANSFERASE"/>
    <property type="match status" value="1"/>
</dbReference>
<dbReference type="PANTHER" id="PTHR45753">
    <property type="entry name" value="ORNITHINE CARBAMOYLTRANSFERASE, MITOCHONDRIAL"/>
    <property type="match status" value="1"/>
</dbReference>
<dbReference type="Pfam" id="PF00185">
    <property type="entry name" value="OTCace"/>
    <property type="match status" value="1"/>
</dbReference>
<dbReference type="Pfam" id="PF02729">
    <property type="entry name" value="OTCace_N"/>
    <property type="match status" value="1"/>
</dbReference>
<dbReference type="PRINTS" id="PR00100">
    <property type="entry name" value="AOTCASE"/>
</dbReference>
<dbReference type="PRINTS" id="PR00101">
    <property type="entry name" value="ATCASE"/>
</dbReference>
<dbReference type="SUPFAM" id="SSF53671">
    <property type="entry name" value="Aspartate/ornithine carbamoyltransferase"/>
    <property type="match status" value="1"/>
</dbReference>
<dbReference type="PROSITE" id="PS00097">
    <property type="entry name" value="CARBAMOYLTRANSFERASE"/>
    <property type="match status" value="1"/>
</dbReference>
<sequence length="307" mass="34162">MNDLSTMSSLTKEEILQLIEEATALKKGKQELGLAGEFVANLFFEPSTRTRFSFEVAEKKLGMNVLSLDAASTSVQKGETLYDTVKTLESIGVKACVIRDSTDEYYNELIGKVGIPIINAGDGCGQHPTQSLLDLMTIYEEFGGFEGLTISIHGDIKHSRVARSNAEVLSRLGATVLFSGPASFQDEQNPHGTYVQVDEAIKQSDVVMLLRIQHERHTEKMGNEDYLSTYGLTVNRAKNMKERAIIMHPAPVNRGVEIDDSLVESKQSRIFKQMENGVYVRMAVLKRAFQNSKLHQKGRESVYVVSH</sequence>
<accession>A8FD14</accession>
<name>PYRB_BACP2</name>
<feature type="chain" id="PRO_1000057009" description="Aspartate carbamoyltransferase catalytic subunit">
    <location>
        <begin position="1"/>
        <end position="307"/>
    </location>
</feature>
<feature type="binding site" evidence="1">
    <location>
        <position position="49"/>
    </location>
    <ligand>
        <name>carbamoyl phosphate</name>
        <dbReference type="ChEBI" id="CHEBI:58228"/>
    </ligand>
</feature>
<feature type="binding site" evidence="1">
    <location>
        <position position="50"/>
    </location>
    <ligand>
        <name>carbamoyl phosphate</name>
        <dbReference type="ChEBI" id="CHEBI:58228"/>
    </ligand>
</feature>
<feature type="binding site" evidence="1">
    <location>
        <position position="77"/>
    </location>
    <ligand>
        <name>L-aspartate</name>
        <dbReference type="ChEBI" id="CHEBI:29991"/>
    </ligand>
</feature>
<feature type="binding site" evidence="1">
    <location>
        <position position="99"/>
    </location>
    <ligand>
        <name>carbamoyl phosphate</name>
        <dbReference type="ChEBI" id="CHEBI:58228"/>
    </ligand>
</feature>
<feature type="binding site" evidence="1">
    <location>
        <position position="127"/>
    </location>
    <ligand>
        <name>carbamoyl phosphate</name>
        <dbReference type="ChEBI" id="CHEBI:58228"/>
    </ligand>
</feature>
<feature type="binding site" evidence="1">
    <location>
        <position position="130"/>
    </location>
    <ligand>
        <name>carbamoyl phosphate</name>
        <dbReference type="ChEBI" id="CHEBI:58228"/>
    </ligand>
</feature>
<feature type="binding site" evidence="1">
    <location>
        <position position="160"/>
    </location>
    <ligand>
        <name>L-aspartate</name>
        <dbReference type="ChEBI" id="CHEBI:29991"/>
    </ligand>
</feature>
<feature type="binding site" evidence="1">
    <location>
        <position position="211"/>
    </location>
    <ligand>
        <name>L-aspartate</name>
        <dbReference type="ChEBI" id="CHEBI:29991"/>
    </ligand>
</feature>
<feature type="binding site" evidence="1">
    <location>
        <position position="250"/>
    </location>
    <ligand>
        <name>carbamoyl phosphate</name>
        <dbReference type="ChEBI" id="CHEBI:58228"/>
    </ligand>
</feature>
<feature type="binding site" evidence="1">
    <location>
        <position position="251"/>
    </location>
    <ligand>
        <name>carbamoyl phosphate</name>
        <dbReference type="ChEBI" id="CHEBI:58228"/>
    </ligand>
</feature>
<gene>
    <name evidence="1" type="primary">pyrB</name>
    <name type="ordered locus">BPUM_1448</name>
</gene>
<proteinExistence type="inferred from homology"/>
<comment type="function">
    <text evidence="1">Catalyzes the condensation of carbamoyl phosphate and aspartate to form carbamoyl aspartate and inorganic phosphate, the committed step in the de novo pyrimidine nucleotide biosynthesis pathway.</text>
</comment>
<comment type="catalytic activity">
    <reaction evidence="1">
        <text>carbamoyl phosphate + L-aspartate = N-carbamoyl-L-aspartate + phosphate + H(+)</text>
        <dbReference type="Rhea" id="RHEA:20013"/>
        <dbReference type="ChEBI" id="CHEBI:15378"/>
        <dbReference type="ChEBI" id="CHEBI:29991"/>
        <dbReference type="ChEBI" id="CHEBI:32814"/>
        <dbReference type="ChEBI" id="CHEBI:43474"/>
        <dbReference type="ChEBI" id="CHEBI:58228"/>
        <dbReference type="EC" id="2.1.3.2"/>
    </reaction>
</comment>
<comment type="pathway">
    <text evidence="1">Pyrimidine metabolism; UMP biosynthesis via de novo pathway; (S)-dihydroorotate from bicarbonate: step 2/3.</text>
</comment>
<comment type="subunit">
    <text evidence="1">Heterododecamer (2C3:3R2) of six catalytic PyrB chains organized as two trimers (C3), and six regulatory PyrI chains organized as three dimers (R2).</text>
</comment>
<comment type="similarity">
    <text evidence="1">Belongs to the aspartate/ornithine carbamoyltransferase superfamily. ATCase family.</text>
</comment>
<organism>
    <name type="scientific">Bacillus pumilus (strain SAFR-032)</name>
    <dbReference type="NCBI Taxonomy" id="315750"/>
    <lineage>
        <taxon>Bacteria</taxon>
        <taxon>Bacillati</taxon>
        <taxon>Bacillota</taxon>
        <taxon>Bacilli</taxon>
        <taxon>Bacillales</taxon>
        <taxon>Bacillaceae</taxon>
        <taxon>Bacillus</taxon>
    </lineage>
</organism>
<keyword id="KW-0665">Pyrimidine biosynthesis</keyword>
<keyword id="KW-0808">Transferase</keyword>
<reference key="1">
    <citation type="journal article" date="2007" name="PLoS ONE">
        <title>Paradoxical DNA repair and peroxide resistance gene conservation in Bacillus pumilus SAFR-032.</title>
        <authorList>
            <person name="Gioia J."/>
            <person name="Yerrapragada S."/>
            <person name="Qin X."/>
            <person name="Jiang H."/>
            <person name="Igboeli O.C."/>
            <person name="Muzny D."/>
            <person name="Dugan-Rocha S."/>
            <person name="Ding Y."/>
            <person name="Hawes A."/>
            <person name="Liu W."/>
            <person name="Perez L."/>
            <person name="Kovar C."/>
            <person name="Dinh H."/>
            <person name="Lee S."/>
            <person name="Nazareth L."/>
            <person name="Blyth P."/>
            <person name="Holder M."/>
            <person name="Buhay C."/>
            <person name="Tirumalai M.R."/>
            <person name="Liu Y."/>
            <person name="Dasgupta I."/>
            <person name="Bokhetache L."/>
            <person name="Fujita M."/>
            <person name="Karouia F."/>
            <person name="Eswara Moorthy P."/>
            <person name="Siefert J."/>
            <person name="Uzman A."/>
            <person name="Buzumbo P."/>
            <person name="Verma A."/>
            <person name="Zwiya H."/>
            <person name="McWilliams B.D."/>
            <person name="Olowu A."/>
            <person name="Clinkenbeard K.D."/>
            <person name="Newcombe D."/>
            <person name="Golebiewski L."/>
            <person name="Petrosino J.F."/>
            <person name="Nicholson W.L."/>
            <person name="Fox G.E."/>
            <person name="Venkateswaran K."/>
            <person name="Highlander S.K."/>
            <person name="Weinstock G.M."/>
        </authorList>
    </citation>
    <scope>NUCLEOTIDE SEQUENCE [LARGE SCALE GENOMIC DNA]</scope>
    <source>
        <strain>SAFR-032</strain>
    </source>
</reference>
<evidence type="ECO:0000255" key="1">
    <source>
        <dbReference type="HAMAP-Rule" id="MF_00001"/>
    </source>
</evidence>
<protein>
    <recommendedName>
        <fullName evidence="1">Aspartate carbamoyltransferase catalytic subunit</fullName>
        <ecNumber evidence="1">2.1.3.2</ecNumber>
    </recommendedName>
    <alternativeName>
        <fullName evidence="1">Aspartate transcarbamylase</fullName>
        <shortName evidence="1">ATCase</shortName>
    </alternativeName>
</protein>